<organism>
    <name type="scientific">Deinococcus radiodurans (strain ATCC 13939 / DSM 20539 / JCM 16871 / CCUG 27074 / LMG 4051 / NBRC 15346 / NCIMB 9279 / VKM B-1422 / R1)</name>
    <dbReference type="NCBI Taxonomy" id="243230"/>
    <lineage>
        <taxon>Bacteria</taxon>
        <taxon>Thermotogati</taxon>
        <taxon>Deinococcota</taxon>
        <taxon>Deinococci</taxon>
        <taxon>Deinococcales</taxon>
        <taxon>Deinococcaceae</taxon>
        <taxon>Deinococcus</taxon>
    </lineage>
</organism>
<sequence length="183" mass="20621">MADMKSIQADTREKMNKAIEAFENNLSVLRTGRANPGILKKIVVDYYGSQMPIDQVASITTPDPRTLVITPWDRGALNPIEKAIRDSDLGLNPNNKGDTIFISLPMLTEERRKDLVKNAKNYAEDARIAVRNLRKHALDEVKKVEGLGEDEIKRGEADVQKITDEYVARVESVFQKKEQEILG</sequence>
<dbReference type="EMBL" id="AE000513">
    <property type="protein sequence ID" value="AAF11077.1"/>
    <property type="molecule type" value="Genomic_DNA"/>
</dbReference>
<dbReference type="PIR" id="C75386">
    <property type="entry name" value="C75386"/>
</dbReference>
<dbReference type="RefSeq" id="NP_295233.1">
    <property type="nucleotide sequence ID" value="NC_001263.1"/>
</dbReference>
<dbReference type="RefSeq" id="WP_010888149.1">
    <property type="nucleotide sequence ID" value="NC_001263.1"/>
</dbReference>
<dbReference type="SMR" id="Q9RU82"/>
<dbReference type="FunCoup" id="Q9RU82">
    <property type="interactions" value="499"/>
</dbReference>
<dbReference type="STRING" id="243230.DR_1510"/>
<dbReference type="PaxDb" id="243230-DR_1510"/>
<dbReference type="EnsemblBacteria" id="AAF11077">
    <property type="protein sequence ID" value="AAF11077"/>
    <property type="gene ID" value="DR_1510"/>
</dbReference>
<dbReference type="GeneID" id="69517749"/>
<dbReference type="KEGG" id="dra:DR_1510"/>
<dbReference type="PATRIC" id="fig|243230.17.peg.1713"/>
<dbReference type="eggNOG" id="COG0233">
    <property type="taxonomic scope" value="Bacteria"/>
</dbReference>
<dbReference type="HOGENOM" id="CLU_073981_2_0_0"/>
<dbReference type="InParanoid" id="Q9RU82"/>
<dbReference type="OrthoDB" id="9804006at2"/>
<dbReference type="Proteomes" id="UP000002524">
    <property type="component" value="Chromosome 1"/>
</dbReference>
<dbReference type="GO" id="GO:0005737">
    <property type="term" value="C:cytoplasm"/>
    <property type="evidence" value="ECO:0007669"/>
    <property type="project" value="UniProtKB-SubCell"/>
</dbReference>
<dbReference type="GO" id="GO:0043023">
    <property type="term" value="F:ribosomal large subunit binding"/>
    <property type="evidence" value="ECO:0000318"/>
    <property type="project" value="GO_Central"/>
</dbReference>
<dbReference type="GO" id="GO:0006412">
    <property type="term" value="P:translation"/>
    <property type="evidence" value="ECO:0000318"/>
    <property type="project" value="GO_Central"/>
</dbReference>
<dbReference type="GO" id="GO:0006415">
    <property type="term" value="P:translational termination"/>
    <property type="evidence" value="ECO:0007669"/>
    <property type="project" value="UniProtKB-UniRule"/>
</dbReference>
<dbReference type="CDD" id="cd00520">
    <property type="entry name" value="RRF"/>
    <property type="match status" value="1"/>
</dbReference>
<dbReference type="FunFam" id="1.10.132.20:FF:000001">
    <property type="entry name" value="Ribosome-recycling factor"/>
    <property type="match status" value="1"/>
</dbReference>
<dbReference type="FunFam" id="3.30.1360.40:FF:000001">
    <property type="entry name" value="Ribosome-recycling factor"/>
    <property type="match status" value="1"/>
</dbReference>
<dbReference type="Gene3D" id="3.30.1360.40">
    <property type="match status" value="1"/>
</dbReference>
<dbReference type="Gene3D" id="1.10.132.20">
    <property type="entry name" value="Ribosome-recycling factor"/>
    <property type="match status" value="1"/>
</dbReference>
<dbReference type="HAMAP" id="MF_00040">
    <property type="entry name" value="RRF"/>
    <property type="match status" value="1"/>
</dbReference>
<dbReference type="InterPro" id="IPR002661">
    <property type="entry name" value="Ribosome_recyc_fac"/>
</dbReference>
<dbReference type="InterPro" id="IPR023584">
    <property type="entry name" value="Ribosome_recyc_fac_dom"/>
</dbReference>
<dbReference type="InterPro" id="IPR036191">
    <property type="entry name" value="RRF_sf"/>
</dbReference>
<dbReference type="NCBIfam" id="TIGR00496">
    <property type="entry name" value="frr"/>
    <property type="match status" value="1"/>
</dbReference>
<dbReference type="PANTHER" id="PTHR20982:SF3">
    <property type="entry name" value="MITOCHONDRIAL RIBOSOME RECYCLING FACTOR PSEUDO 1"/>
    <property type="match status" value="1"/>
</dbReference>
<dbReference type="PANTHER" id="PTHR20982">
    <property type="entry name" value="RIBOSOME RECYCLING FACTOR"/>
    <property type="match status" value="1"/>
</dbReference>
<dbReference type="Pfam" id="PF01765">
    <property type="entry name" value="RRF"/>
    <property type="match status" value="1"/>
</dbReference>
<dbReference type="SUPFAM" id="SSF55194">
    <property type="entry name" value="Ribosome recycling factor, RRF"/>
    <property type="match status" value="1"/>
</dbReference>
<accession>Q9RU82</accession>
<keyword id="KW-0963">Cytoplasm</keyword>
<keyword id="KW-0648">Protein biosynthesis</keyword>
<keyword id="KW-1185">Reference proteome</keyword>
<protein>
    <recommendedName>
        <fullName evidence="1">Ribosome-recycling factor</fullName>
        <shortName evidence="1">RRF</shortName>
    </recommendedName>
    <alternativeName>
        <fullName evidence="1">Ribosome-releasing factor</fullName>
    </alternativeName>
</protein>
<reference key="1">
    <citation type="journal article" date="1999" name="Science">
        <title>Genome sequence of the radioresistant bacterium Deinococcus radiodurans R1.</title>
        <authorList>
            <person name="White O."/>
            <person name="Eisen J.A."/>
            <person name="Heidelberg J.F."/>
            <person name="Hickey E.K."/>
            <person name="Peterson J.D."/>
            <person name="Dodson R.J."/>
            <person name="Haft D.H."/>
            <person name="Gwinn M.L."/>
            <person name="Nelson W.C."/>
            <person name="Richardson D.L."/>
            <person name="Moffat K.S."/>
            <person name="Qin H."/>
            <person name="Jiang L."/>
            <person name="Pamphile W."/>
            <person name="Crosby M."/>
            <person name="Shen M."/>
            <person name="Vamathevan J.J."/>
            <person name="Lam P."/>
            <person name="McDonald L.A."/>
            <person name="Utterback T.R."/>
            <person name="Zalewski C."/>
            <person name="Makarova K.S."/>
            <person name="Aravind L."/>
            <person name="Daly M.J."/>
            <person name="Minton K.W."/>
            <person name="Fleischmann R.D."/>
            <person name="Ketchum K.A."/>
            <person name="Nelson K.E."/>
            <person name="Salzberg S.L."/>
            <person name="Smith H.O."/>
            <person name="Venter J.C."/>
            <person name="Fraser C.M."/>
        </authorList>
    </citation>
    <scope>NUCLEOTIDE SEQUENCE [LARGE SCALE GENOMIC DNA]</scope>
    <source>
        <strain>ATCC 13939 / DSM 20539 / JCM 16871 / CCUG 27074 / LMG 4051 / NBRC 15346 / NCIMB 9279 / VKM B-1422 / R1</strain>
    </source>
</reference>
<comment type="function">
    <text evidence="1">Responsible for the release of ribosomes from messenger RNA at the termination of protein biosynthesis. May increase the efficiency of translation by recycling ribosomes from one round of translation to another.</text>
</comment>
<comment type="subcellular location">
    <subcellularLocation>
        <location evidence="1">Cytoplasm</location>
    </subcellularLocation>
</comment>
<comment type="similarity">
    <text evidence="1">Belongs to the RRF family.</text>
</comment>
<proteinExistence type="inferred from homology"/>
<gene>
    <name evidence="1" type="primary">frr</name>
    <name type="ordered locus">DR_1510</name>
</gene>
<name>RRF_DEIRA</name>
<feature type="chain" id="PRO_0000167451" description="Ribosome-recycling factor">
    <location>
        <begin position="1"/>
        <end position="183"/>
    </location>
</feature>
<evidence type="ECO:0000255" key="1">
    <source>
        <dbReference type="HAMAP-Rule" id="MF_00040"/>
    </source>
</evidence>